<feature type="chain" id="PRO_1000075647" description="Holo-[acyl-carrier-protein] synthase">
    <location>
        <begin position="1"/>
        <end position="119"/>
    </location>
</feature>
<feature type="binding site" evidence="1">
    <location>
        <position position="8"/>
    </location>
    <ligand>
        <name>Mg(2+)</name>
        <dbReference type="ChEBI" id="CHEBI:18420"/>
    </ligand>
</feature>
<feature type="binding site" evidence="1">
    <location>
        <position position="53"/>
    </location>
    <ligand>
        <name>Mg(2+)</name>
        <dbReference type="ChEBI" id="CHEBI:18420"/>
    </ligand>
</feature>
<sequence length="119" mass="13673">MIRGIGVDIVKVDRINEKNVQKILSQKEKEIYDTFKGQKRKKEYAAGRFAVKESLIKCFKRFIPYSQITVLNKQSGEPYLDEESVKYLFEKFGGNGTIHISIAHEREFAVATAVVIDED</sequence>
<accession>A9BJX6</accession>
<protein>
    <recommendedName>
        <fullName evidence="1">Holo-[acyl-carrier-protein] synthase</fullName>
        <shortName evidence="1">Holo-ACP synthase</shortName>
        <ecNumber evidence="1">2.7.8.7</ecNumber>
    </recommendedName>
    <alternativeName>
        <fullName evidence="1">4'-phosphopantetheinyl transferase AcpS</fullName>
    </alternativeName>
</protein>
<comment type="function">
    <text evidence="1">Transfers the 4'-phosphopantetheine moiety from coenzyme A to a Ser of acyl-carrier-protein.</text>
</comment>
<comment type="catalytic activity">
    <reaction evidence="1">
        <text>apo-[ACP] + CoA = holo-[ACP] + adenosine 3',5'-bisphosphate + H(+)</text>
        <dbReference type="Rhea" id="RHEA:12068"/>
        <dbReference type="Rhea" id="RHEA-COMP:9685"/>
        <dbReference type="Rhea" id="RHEA-COMP:9690"/>
        <dbReference type="ChEBI" id="CHEBI:15378"/>
        <dbReference type="ChEBI" id="CHEBI:29999"/>
        <dbReference type="ChEBI" id="CHEBI:57287"/>
        <dbReference type="ChEBI" id="CHEBI:58343"/>
        <dbReference type="ChEBI" id="CHEBI:64479"/>
        <dbReference type="EC" id="2.7.8.7"/>
    </reaction>
</comment>
<comment type="cofactor">
    <cofactor evidence="1">
        <name>Mg(2+)</name>
        <dbReference type="ChEBI" id="CHEBI:18420"/>
    </cofactor>
</comment>
<comment type="subcellular location">
    <subcellularLocation>
        <location evidence="1">Cytoplasm</location>
    </subcellularLocation>
</comment>
<comment type="similarity">
    <text evidence="1">Belongs to the P-Pant transferase superfamily. AcpS family.</text>
</comment>
<dbReference type="EC" id="2.7.8.7" evidence="1"/>
<dbReference type="EMBL" id="CP000879">
    <property type="protein sequence ID" value="ABX31719.1"/>
    <property type="molecule type" value="Genomic_DNA"/>
</dbReference>
<dbReference type="RefSeq" id="WP_012208822.1">
    <property type="nucleotide sequence ID" value="NC_010003.1"/>
</dbReference>
<dbReference type="SMR" id="A9BJX6"/>
<dbReference type="STRING" id="403833.Pmob_0997"/>
<dbReference type="KEGG" id="pmo:Pmob_0997"/>
<dbReference type="eggNOG" id="COG0736">
    <property type="taxonomic scope" value="Bacteria"/>
</dbReference>
<dbReference type="HOGENOM" id="CLU_089696_0_2_0"/>
<dbReference type="OrthoDB" id="517356at2"/>
<dbReference type="Proteomes" id="UP000000789">
    <property type="component" value="Chromosome"/>
</dbReference>
<dbReference type="GO" id="GO:0005737">
    <property type="term" value="C:cytoplasm"/>
    <property type="evidence" value="ECO:0007669"/>
    <property type="project" value="UniProtKB-SubCell"/>
</dbReference>
<dbReference type="GO" id="GO:0008897">
    <property type="term" value="F:holo-[acyl-carrier-protein] synthase activity"/>
    <property type="evidence" value="ECO:0007669"/>
    <property type="project" value="UniProtKB-UniRule"/>
</dbReference>
<dbReference type="GO" id="GO:0000287">
    <property type="term" value="F:magnesium ion binding"/>
    <property type="evidence" value="ECO:0007669"/>
    <property type="project" value="UniProtKB-UniRule"/>
</dbReference>
<dbReference type="GO" id="GO:0006633">
    <property type="term" value="P:fatty acid biosynthetic process"/>
    <property type="evidence" value="ECO:0007669"/>
    <property type="project" value="UniProtKB-UniRule"/>
</dbReference>
<dbReference type="Gene3D" id="3.90.470.20">
    <property type="entry name" value="4'-phosphopantetheinyl transferase domain"/>
    <property type="match status" value="1"/>
</dbReference>
<dbReference type="HAMAP" id="MF_00101">
    <property type="entry name" value="AcpS"/>
    <property type="match status" value="1"/>
</dbReference>
<dbReference type="InterPro" id="IPR008278">
    <property type="entry name" value="4-PPantetheinyl_Trfase_dom"/>
</dbReference>
<dbReference type="InterPro" id="IPR037143">
    <property type="entry name" value="4-PPantetheinyl_Trfase_dom_sf"/>
</dbReference>
<dbReference type="InterPro" id="IPR002582">
    <property type="entry name" value="ACPS"/>
</dbReference>
<dbReference type="InterPro" id="IPR004568">
    <property type="entry name" value="Ppantetheine-prot_Trfase_dom"/>
</dbReference>
<dbReference type="NCBIfam" id="TIGR00516">
    <property type="entry name" value="acpS"/>
    <property type="match status" value="1"/>
</dbReference>
<dbReference type="NCBIfam" id="TIGR00556">
    <property type="entry name" value="pantethn_trn"/>
    <property type="match status" value="1"/>
</dbReference>
<dbReference type="Pfam" id="PF01648">
    <property type="entry name" value="ACPS"/>
    <property type="match status" value="1"/>
</dbReference>
<dbReference type="SUPFAM" id="SSF56214">
    <property type="entry name" value="4'-phosphopantetheinyl transferase"/>
    <property type="match status" value="1"/>
</dbReference>
<keyword id="KW-0963">Cytoplasm</keyword>
<keyword id="KW-0275">Fatty acid biosynthesis</keyword>
<keyword id="KW-0276">Fatty acid metabolism</keyword>
<keyword id="KW-0444">Lipid biosynthesis</keyword>
<keyword id="KW-0443">Lipid metabolism</keyword>
<keyword id="KW-0460">Magnesium</keyword>
<keyword id="KW-0479">Metal-binding</keyword>
<keyword id="KW-0808">Transferase</keyword>
<reference key="1">
    <citation type="submission" date="2007-11" db="EMBL/GenBank/DDBJ databases">
        <title>Complete sequence of Petroga mobilis SJ95.</title>
        <authorList>
            <consortium name="US DOE Joint Genome Institute"/>
            <person name="Copeland A."/>
            <person name="Lucas S."/>
            <person name="Lapidus A."/>
            <person name="Barry K."/>
            <person name="Glavina del Rio T."/>
            <person name="Dalin E."/>
            <person name="Tice H."/>
            <person name="Pitluck S."/>
            <person name="Meincke L."/>
            <person name="Brettin T."/>
            <person name="Bruce D."/>
            <person name="Detter J.C."/>
            <person name="Han C."/>
            <person name="Kuske C.R."/>
            <person name="Schmutz J."/>
            <person name="Larimer F."/>
            <person name="Land M."/>
            <person name="Hauser L."/>
            <person name="Kyrpides N."/>
            <person name="Mikhailova N."/>
            <person name="Noll K."/>
            <person name="Richardson P."/>
        </authorList>
    </citation>
    <scope>NUCLEOTIDE SEQUENCE [LARGE SCALE GENOMIC DNA]</scope>
    <source>
        <strain>DSM 10674 / SJ95</strain>
    </source>
</reference>
<gene>
    <name evidence="1" type="primary">acpS</name>
    <name type="ordered locus">Pmob_0997</name>
</gene>
<proteinExistence type="inferred from homology"/>
<name>ACPS_PETMO</name>
<organism>
    <name type="scientific">Petrotoga mobilis (strain DSM 10674 / SJ95)</name>
    <dbReference type="NCBI Taxonomy" id="403833"/>
    <lineage>
        <taxon>Bacteria</taxon>
        <taxon>Thermotogati</taxon>
        <taxon>Thermotogota</taxon>
        <taxon>Thermotogae</taxon>
        <taxon>Petrotogales</taxon>
        <taxon>Petrotogaceae</taxon>
        <taxon>Petrotoga</taxon>
    </lineage>
</organism>
<evidence type="ECO:0000255" key="1">
    <source>
        <dbReference type="HAMAP-Rule" id="MF_00101"/>
    </source>
</evidence>